<protein>
    <recommendedName>
        <fullName evidence="1">Sulfite reductase [NADPH] hemoprotein beta-component</fullName>
        <shortName evidence="1">SiR-HP</shortName>
        <shortName evidence="1">SiRHP</shortName>
        <ecNumber evidence="1">1.8.1.2</ecNumber>
    </recommendedName>
</protein>
<accession>B7MYR1</accession>
<keyword id="KW-0004">4Fe-4S</keyword>
<keyword id="KW-0028">Amino-acid biosynthesis</keyword>
<keyword id="KW-0198">Cysteine biosynthesis</keyword>
<keyword id="KW-0349">Heme</keyword>
<keyword id="KW-0408">Iron</keyword>
<keyword id="KW-0411">Iron-sulfur</keyword>
<keyword id="KW-0479">Metal-binding</keyword>
<keyword id="KW-0521">NADP</keyword>
<keyword id="KW-0560">Oxidoreductase</keyword>
<name>CYSI_ECO81</name>
<reference key="1">
    <citation type="journal article" date="2009" name="PLoS Genet.">
        <title>Organised genome dynamics in the Escherichia coli species results in highly diverse adaptive paths.</title>
        <authorList>
            <person name="Touchon M."/>
            <person name="Hoede C."/>
            <person name="Tenaillon O."/>
            <person name="Barbe V."/>
            <person name="Baeriswyl S."/>
            <person name="Bidet P."/>
            <person name="Bingen E."/>
            <person name="Bonacorsi S."/>
            <person name="Bouchier C."/>
            <person name="Bouvet O."/>
            <person name="Calteau A."/>
            <person name="Chiapello H."/>
            <person name="Clermont O."/>
            <person name="Cruveiller S."/>
            <person name="Danchin A."/>
            <person name="Diard M."/>
            <person name="Dossat C."/>
            <person name="Karoui M.E."/>
            <person name="Frapy E."/>
            <person name="Garry L."/>
            <person name="Ghigo J.M."/>
            <person name="Gilles A.M."/>
            <person name="Johnson J."/>
            <person name="Le Bouguenec C."/>
            <person name="Lescat M."/>
            <person name="Mangenot S."/>
            <person name="Martinez-Jehanne V."/>
            <person name="Matic I."/>
            <person name="Nassif X."/>
            <person name="Oztas S."/>
            <person name="Petit M.A."/>
            <person name="Pichon C."/>
            <person name="Rouy Z."/>
            <person name="Ruf C.S."/>
            <person name="Schneider D."/>
            <person name="Tourret J."/>
            <person name="Vacherie B."/>
            <person name="Vallenet D."/>
            <person name="Medigue C."/>
            <person name="Rocha E.P.C."/>
            <person name="Denamur E."/>
        </authorList>
    </citation>
    <scope>NUCLEOTIDE SEQUENCE [LARGE SCALE GENOMIC DNA]</scope>
    <source>
        <strain>ED1a</strain>
    </source>
</reference>
<gene>
    <name evidence="1" type="primary">cysI</name>
    <name type="ordered locus">ECED1_3212</name>
</gene>
<organism>
    <name type="scientific">Escherichia coli O81 (strain ED1a)</name>
    <dbReference type="NCBI Taxonomy" id="585397"/>
    <lineage>
        <taxon>Bacteria</taxon>
        <taxon>Pseudomonadati</taxon>
        <taxon>Pseudomonadota</taxon>
        <taxon>Gammaproteobacteria</taxon>
        <taxon>Enterobacterales</taxon>
        <taxon>Enterobacteriaceae</taxon>
        <taxon>Escherichia</taxon>
    </lineage>
</organism>
<feature type="chain" id="PRO_1000185232" description="Sulfite reductase [NADPH] hemoprotein beta-component">
    <location>
        <begin position="1"/>
        <end position="570"/>
    </location>
</feature>
<feature type="binding site" evidence="1">
    <location>
        <position position="434"/>
    </location>
    <ligand>
        <name>[4Fe-4S] cluster</name>
        <dbReference type="ChEBI" id="CHEBI:49883"/>
    </ligand>
</feature>
<feature type="binding site" evidence="1">
    <location>
        <position position="440"/>
    </location>
    <ligand>
        <name>[4Fe-4S] cluster</name>
        <dbReference type="ChEBI" id="CHEBI:49883"/>
    </ligand>
</feature>
<feature type="binding site" evidence="1">
    <location>
        <position position="479"/>
    </location>
    <ligand>
        <name>[4Fe-4S] cluster</name>
        <dbReference type="ChEBI" id="CHEBI:49883"/>
    </ligand>
</feature>
<feature type="binding site" evidence="1">
    <location>
        <position position="483"/>
    </location>
    <ligand>
        <name>[4Fe-4S] cluster</name>
        <dbReference type="ChEBI" id="CHEBI:49883"/>
    </ligand>
</feature>
<feature type="binding site" description="axial binding residue" evidence="1">
    <location>
        <position position="483"/>
    </location>
    <ligand>
        <name>siroheme</name>
        <dbReference type="ChEBI" id="CHEBI:60052"/>
    </ligand>
    <ligandPart>
        <name>Fe</name>
        <dbReference type="ChEBI" id="CHEBI:18248"/>
    </ligandPart>
</feature>
<dbReference type="EC" id="1.8.1.2" evidence="1"/>
<dbReference type="EMBL" id="CU928162">
    <property type="protein sequence ID" value="CAR09228.1"/>
    <property type="molecule type" value="Genomic_DNA"/>
</dbReference>
<dbReference type="RefSeq" id="WP_001290708.1">
    <property type="nucleotide sequence ID" value="NC_011745.1"/>
</dbReference>
<dbReference type="SMR" id="B7MYR1"/>
<dbReference type="KEGG" id="ecq:ECED1_3212"/>
<dbReference type="HOGENOM" id="CLU_001975_3_2_6"/>
<dbReference type="UniPathway" id="UPA00140">
    <property type="reaction ID" value="UER00207"/>
</dbReference>
<dbReference type="Proteomes" id="UP000000748">
    <property type="component" value="Chromosome"/>
</dbReference>
<dbReference type="GO" id="GO:0009337">
    <property type="term" value="C:sulfite reductase complex (NADPH)"/>
    <property type="evidence" value="ECO:0007669"/>
    <property type="project" value="InterPro"/>
</dbReference>
<dbReference type="GO" id="GO:0051539">
    <property type="term" value="F:4 iron, 4 sulfur cluster binding"/>
    <property type="evidence" value="ECO:0007669"/>
    <property type="project" value="UniProtKB-KW"/>
</dbReference>
<dbReference type="GO" id="GO:0020037">
    <property type="term" value="F:heme binding"/>
    <property type="evidence" value="ECO:0007669"/>
    <property type="project" value="InterPro"/>
</dbReference>
<dbReference type="GO" id="GO:0046872">
    <property type="term" value="F:metal ion binding"/>
    <property type="evidence" value="ECO:0007669"/>
    <property type="project" value="UniProtKB-KW"/>
</dbReference>
<dbReference type="GO" id="GO:0050661">
    <property type="term" value="F:NADP binding"/>
    <property type="evidence" value="ECO:0007669"/>
    <property type="project" value="InterPro"/>
</dbReference>
<dbReference type="GO" id="GO:0050311">
    <property type="term" value="F:sulfite reductase (ferredoxin) activity"/>
    <property type="evidence" value="ECO:0007669"/>
    <property type="project" value="TreeGrafter"/>
</dbReference>
<dbReference type="GO" id="GO:0004783">
    <property type="term" value="F:sulfite reductase (NADPH) activity"/>
    <property type="evidence" value="ECO:0007669"/>
    <property type="project" value="UniProtKB-UniRule"/>
</dbReference>
<dbReference type="GO" id="GO:0019344">
    <property type="term" value="P:cysteine biosynthetic process"/>
    <property type="evidence" value="ECO:0007669"/>
    <property type="project" value="UniProtKB-KW"/>
</dbReference>
<dbReference type="GO" id="GO:0070814">
    <property type="term" value="P:hydrogen sulfide biosynthetic process"/>
    <property type="evidence" value="ECO:0007669"/>
    <property type="project" value="UniProtKB-UniRule"/>
</dbReference>
<dbReference type="GO" id="GO:0000103">
    <property type="term" value="P:sulfate assimilation"/>
    <property type="evidence" value="ECO:0007669"/>
    <property type="project" value="UniProtKB-UniRule"/>
</dbReference>
<dbReference type="FunFam" id="3.30.413.10:FF:000003">
    <property type="entry name" value="Sulfite reductase [NADPH] hemoprotein beta-component"/>
    <property type="match status" value="1"/>
</dbReference>
<dbReference type="FunFam" id="3.30.413.10:FF:000004">
    <property type="entry name" value="Sulfite reductase [NADPH] hemoprotein beta-component"/>
    <property type="match status" value="1"/>
</dbReference>
<dbReference type="Gene3D" id="3.30.413.10">
    <property type="entry name" value="Sulfite Reductase Hemoprotein, domain 1"/>
    <property type="match status" value="2"/>
</dbReference>
<dbReference type="HAMAP" id="MF_01540">
    <property type="entry name" value="CysI"/>
    <property type="match status" value="1"/>
</dbReference>
<dbReference type="InterPro" id="IPR011786">
    <property type="entry name" value="CysI"/>
</dbReference>
<dbReference type="InterPro" id="IPR005117">
    <property type="entry name" value="NiRdtase/SiRdtase_haem-b_fer"/>
</dbReference>
<dbReference type="InterPro" id="IPR036136">
    <property type="entry name" value="Nit/Sulf_reduc_fer-like_dom_sf"/>
</dbReference>
<dbReference type="InterPro" id="IPR006067">
    <property type="entry name" value="NO2/SO3_Rdtase_4Fe4S_dom"/>
</dbReference>
<dbReference type="InterPro" id="IPR045169">
    <property type="entry name" value="NO2/SO3_Rdtase_4Fe4S_prot"/>
</dbReference>
<dbReference type="InterPro" id="IPR045854">
    <property type="entry name" value="NO2/SO3_Rdtase_4Fe4S_sf"/>
</dbReference>
<dbReference type="InterPro" id="IPR006066">
    <property type="entry name" value="NO2/SO3_Rdtase_FeS/sirohaem_BS"/>
</dbReference>
<dbReference type="NCBIfam" id="TIGR02041">
    <property type="entry name" value="CysI"/>
    <property type="match status" value="1"/>
</dbReference>
<dbReference type="NCBIfam" id="NF010029">
    <property type="entry name" value="PRK13504.1"/>
    <property type="match status" value="1"/>
</dbReference>
<dbReference type="PANTHER" id="PTHR11493:SF47">
    <property type="entry name" value="SULFITE REDUCTASE [NADPH] SUBUNIT BETA"/>
    <property type="match status" value="1"/>
</dbReference>
<dbReference type="PANTHER" id="PTHR11493">
    <property type="entry name" value="SULFITE REDUCTASE [NADPH] SUBUNIT BETA-RELATED"/>
    <property type="match status" value="1"/>
</dbReference>
<dbReference type="Pfam" id="PF01077">
    <property type="entry name" value="NIR_SIR"/>
    <property type="match status" value="1"/>
</dbReference>
<dbReference type="Pfam" id="PF03460">
    <property type="entry name" value="NIR_SIR_ferr"/>
    <property type="match status" value="2"/>
</dbReference>
<dbReference type="PRINTS" id="PR00397">
    <property type="entry name" value="SIROHAEM"/>
</dbReference>
<dbReference type="SUPFAM" id="SSF56014">
    <property type="entry name" value="Nitrite and sulphite reductase 4Fe-4S domain-like"/>
    <property type="match status" value="2"/>
</dbReference>
<dbReference type="SUPFAM" id="SSF55124">
    <property type="entry name" value="Nitrite/Sulfite reductase N-terminal domain-like"/>
    <property type="match status" value="2"/>
</dbReference>
<dbReference type="PROSITE" id="PS00365">
    <property type="entry name" value="NIR_SIR"/>
    <property type="match status" value="1"/>
</dbReference>
<sequence>MSEKHPGPLVVEGKLTDAERMKLESNYLRGTIAEDLNDGLTGGFKGDNFLLIRFHGMYQQDDRDIRAERAEQKLEPRHAMLLRCRLPGGVITTKQWQAIDKFAGENTIYGSIRLTNRQTFQFHGILKKNVKPVHQMLHSVGLDALATANDMNRNVLCTSNPYESQLHAEAYEWAKKISEHLLPRTRAYAEIWLDQEKVATTDEEPILGQTYLPRKFKTTVVIPPQNDIDLHANDMNFVAIAENGKLVGFNLLVGGGLSIEHGNKKTYARTASEFGYLPLEHTLAVAEAVVTTQRDWGNRTDRKNAKTKYTLERVGVETFKAEVERRAGIKFEPIRPYEFTGRGDRIGWVKGIDDNWHLTLFIENGRILDYPGRPLKTGLLEIAKIHKGDFRITANQNLIIAGVPESEKAKIEKIAKESGLMNAVTPQRENSMACVSFPTCPLAMAEAERFLPSFIDNIDNLMAKHGVSDEHIVMRVTGCPNGCGRAMLAEVGLVGKAPGRYNLHLGGNRIGTRIPRMYKENITEPEILASLDELIGRWAKEREVGEGFGDFTVRAGIIRPVLDPARDLWD</sequence>
<evidence type="ECO:0000255" key="1">
    <source>
        <dbReference type="HAMAP-Rule" id="MF_01540"/>
    </source>
</evidence>
<comment type="function">
    <text evidence="1">Component of the sulfite reductase complex that catalyzes the 6-electron reduction of sulfite to sulfide. This is one of several activities required for the biosynthesis of L-cysteine from sulfate.</text>
</comment>
<comment type="catalytic activity">
    <reaction evidence="1">
        <text>hydrogen sulfide + 3 NADP(+) + 3 H2O = sulfite + 3 NADPH + 4 H(+)</text>
        <dbReference type="Rhea" id="RHEA:13801"/>
        <dbReference type="ChEBI" id="CHEBI:15377"/>
        <dbReference type="ChEBI" id="CHEBI:15378"/>
        <dbReference type="ChEBI" id="CHEBI:17359"/>
        <dbReference type="ChEBI" id="CHEBI:29919"/>
        <dbReference type="ChEBI" id="CHEBI:57783"/>
        <dbReference type="ChEBI" id="CHEBI:58349"/>
        <dbReference type="EC" id="1.8.1.2"/>
    </reaction>
</comment>
<comment type="cofactor">
    <cofactor evidence="1">
        <name>siroheme</name>
        <dbReference type="ChEBI" id="CHEBI:60052"/>
    </cofactor>
    <text evidence="1">Binds 1 siroheme per subunit.</text>
</comment>
<comment type="cofactor">
    <cofactor evidence="1">
        <name>[4Fe-4S] cluster</name>
        <dbReference type="ChEBI" id="CHEBI:49883"/>
    </cofactor>
    <text evidence="1">Binds 1 [4Fe-4S] cluster per subunit.</text>
</comment>
<comment type="pathway">
    <text evidence="1">Sulfur metabolism; hydrogen sulfide biosynthesis; hydrogen sulfide from sulfite (NADPH route): step 1/1.</text>
</comment>
<comment type="subunit">
    <text evidence="1">Alpha(8)-beta(8). The alpha component is a flavoprotein, the beta component is a hemoprotein.</text>
</comment>
<comment type="similarity">
    <text evidence="1">Belongs to the nitrite and sulfite reductase 4Fe-4S domain family.</text>
</comment>
<proteinExistence type="inferred from homology"/>